<dbReference type="EMBL" id="M38221">
    <property type="protein sequence ID" value="AAA23385.1"/>
    <property type="molecule type" value="Genomic_DNA"/>
</dbReference>
<dbReference type="EMBL" id="X99694">
    <property type="protein sequence ID" value="CAA68010.1"/>
    <property type="molecule type" value="Genomic_DNA"/>
</dbReference>
<dbReference type="EMBL" id="X78558">
    <property type="protein sequence ID" value="CAA55301.1"/>
    <property type="molecule type" value="Genomic_DNA"/>
</dbReference>
<dbReference type="PIR" id="A39414">
    <property type="entry name" value="A39414"/>
</dbReference>
<dbReference type="SMR" id="P28579"/>
<dbReference type="GO" id="GO:0009055">
    <property type="term" value="F:electron transfer activity"/>
    <property type="evidence" value="ECO:0007669"/>
    <property type="project" value="InterPro"/>
</dbReference>
<dbReference type="GO" id="GO:0010181">
    <property type="term" value="F:FMN binding"/>
    <property type="evidence" value="ECO:0007669"/>
    <property type="project" value="InterPro"/>
</dbReference>
<dbReference type="GO" id="GO:0009399">
    <property type="term" value="P:nitrogen fixation"/>
    <property type="evidence" value="ECO:0007669"/>
    <property type="project" value="UniProtKB-KW"/>
</dbReference>
<dbReference type="Gene3D" id="3.40.50.360">
    <property type="match status" value="1"/>
</dbReference>
<dbReference type="InterPro" id="IPR001094">
    <property type="entry name" value="Flavdoxin-like"/>
</dbReference>
<dbReference type="InterPro" id="IPR050619">
    <property type="entry name" value="Flavodoxin"/>
</dbReference>
<dbReference type="InterPro" id="IPR008254">
    <property type="entry name" value="Flavodoxin/NO_synth"/>
</dbReference>
<dbReference type="InterPro" id="IPR001226">
    <property type="entry name" value="Flavodoxin_CS"/>
</dbReference>
<dbReference type="InterPro" id="IPR010086">
    <property type="entry name" value="Flavodoxin_lc"/>
</dbReference>
<dbReference type="InterPro" id="IPR029039">
    <property type="entry name" value="Flavoprotein-like_sf"/>
</dbReference>
<dbReference type="NCBIfam" id="TIGR01752">
    <property type="entry name" value="flav_long"/>
    <property type="match status" value="1"/>
</dbReference>
<dbReference type="NCBIfam" id="NF006739">
    <property type="entry name" value="PRK09267.1-5"/>
    <property type="match status" value="1"/>
</dbReference>
<dbReference type="PANTHER" id="PTHR42809:SF1">
    <property type="entry name" value="FLAVODOXIN 1"/>
    <property type="match status" value="1"/>
</dbReference>
<dbReference type="PANTHER" id="PTHR42809">
    <property type="entry name" value="FLAVODOXIN 2"/>
    <property type="match status" value="1"/>
</dbReference>
<dbReference type="Pfam" id="PF00258">
    <property type="entry name" value="Flavodoxin_1"/>
    <property type="match status" value="1"/>
</dbReference>
<dbReference type="PIRSF" id="PIRSF038996">
    <property type="entry name" value="FldA"/>
    <property type="match status" value="1"/>
</dbReference>
<dbReference type="PRINTS" id="PR00369">
    <property type="entry name" value="FLAVODOXIN"/>
</dbReference>
<dbReference type="SUPFAM" id="SSF52218">
    <property type="entry name" value="Flavoproteins"/>
    <property type="match status" value="1"/>
</dbReference>
<dbReference type="PROSITE" id="PS00201">
    <property type="entry name" value="FLAVODOXIN"/>
    <property type="match status" value="1"/>
</dbReference>
<dbReference type="PROSITE" id="PS50902">
    <property type="entry name" value="FLAVODOXIN_LIKE"/>
    <property type="match status" value="1"/>
</dbReference>
<sequence length="177" mass="19581">MATIGIFFGSDTGQTRKVAKLIHQKLDGIADAPLDVRRATREQFLSYPVLLLGTPTLGDGELPGVEAGSQYDSWQEFTNTLSEADLTGKTVALFGLGDQLNYSKNFVSAMRILYDLVIARGACVVGNWPREGYKFSFSAALLENNEFVGLPLDQENQYDLTEERIDSWLEKLKPAVL</sequence>
<feature type="chain" id="PRO_0000171631" description="Flavodoxin">
    <location>
        <begin position="1"/>
        <end position="177"/>
    </location>
</feature>
<feature type="domain" description="Flavodoxin-like" evidence="1">
    <location>
        <begin position="4"/>
        <end position="173"/>
    </location>
</feature>
<reference key="1">
    <citation type="journal article" date="1991" name="J. Bacteriol.">
        <title>Cotranscription of the electron transport protein genes nifJ and nifF in Enterobacter agglomerans 333.</title>
        <authorList>
            <person name="Kreutzer R."/>
            <person name="Dayananda S."/>
            <person name="Klingmueller W."/>
        </authorList>
    </citation>
    <scope>NUCLEOTIDE SEQUENCE [GENOMIC DNA]</scope>
    <source>
        <strain>333</strain>
    </source>
</reference>
<reference key="2">
    <citation type="submission" date="1994-03" db="EMBL/GenBank/DDBJ databases">
        <authorList>
            <person name="Schwickerath O."/>
        </authorList>
    </citation>
    <scope>NUCLEOTIDE SEQUENCE [GENOMIC DNA] OF 1-21</scope>
    <source>
        <strain>333</strain>
    </source>
</reference>
<gene>
    <name type="primary">nifF</name>
</gene>
<protein>
    <recommendedName>
        <fullName>Flavodoxin</fullName>
    </recommendedName>
</protein>
<name>FLAV_ENTAG</name>
<geneLocation type="plasmid">
    <name>pEA3</name>
</geneLocation>
<comment type="function">
    <text>Low-potential electron donor to a number of redox enzymes. NifF is the electron donor to nitrogenase.</text>
</comment>
<comment type="cofactor">
    <cofactor>
        <name>FMN</name>
        <dbReference type="ChEBI" id="CHEBI:58210"/>
    </cofactor>
</comment>
<comment type="similarity">
    <text evidence="2">Belongs to the flavodoxin family.</text>
</comment>
<evidence type="ECO:0000255" key="1">
    <source>
        <dbReference type="PROSITE-ProRule" id="PRU00088"/>
    </source>
</evidence>
<evidence type="ECO:0000305" key="2"/>
<accession>P28579</accession>
<keyword id="KW-0249">Electron transport</keyword>
<keyword id="KW-0285">Flavoprotein</keyword>
<keyword id="KW-0288">FMN</keyword>
<keyword id="KW-0535">Nitrogen fixation</keyword>
<keyword id="KW-0614">Plasmid</keyword>
<keyword id="KW-0813">Transport</keyword>
<proteinExistence type="inferred from homology"/>
<organism>
    <name type="scientific">Enterobacter agglomerans</name>
    <name type="common">Erwinia herbicola</name>
    <name type="synonym">Pantoea agglomerans</name>
    <dbReference type="NCBI Taxonomy" id="549"/>
    <lineage>
        <taxon>Bacteria</taxon>
        <taxon>Pseudomonadati</taxon>
        <taxon>Pseudomonadota</taxon>
        <taxon>Gammaproteobacteria</taxon>
        <taxon>Enterobacterales</taxon>
        <taxon>Erwiniaceae</taxon>
        <taxon>Pantoea</taxon>
        <taxon>Pantoea agglomerans group</taxon>
    </lineage>
</organism>